<reference key="1">
    <citation type="submission" date="2009-01" db="EMBL/GenBank/DDBJ databases">
        <title>Complete sequence of Clostridium cellulolyticum H10.</title>
        <authorList>
            <consortium name="US DOE Joint Genome Institute"/>
            <person name="Lucas S."/>
            <person name="Copeland A."/>
            <person name="Lapidus A."/>
            <person name="Glavina del Rio T."/>
            <person name="Dalin E."/>
            <person name="Tice H."/>
            <person name="Bruce D."/>
            <person name="Goodwin L."/>
            <person name="Pitluck S."/>
            <person name="Chertkov O."/>
            <person name="Saunders E."/>
            <person name="Brettin T."/>
            <person name="Detter J.C."/>
            <person name="Han C."/>
            <person name="Larimer F."/>
            <person name="Land M."/>
            <person name="Hauser L."/>
            <person name="Kyrpides N."/>
            <person name="Ivanova N."/>
            <person name="Zhou J."/>
            <person name="Richardson P."/>
        </authorList>
    </citation>
    <scope>NUCLEOTIDE SEQUENCE [LARGE SCALE GENOMIC DNA]</scope>
    <source>
        <strain>ATCC 35319 / DSM 5812 / JCM 6584 / H10</strain>
    </source>
</reference>
<organism>
    <name type="scientific">Ruminiclostridium cellulolyticum (strain ATCC 35319 / DSM 5812 / JCM 6584 / H10)</name>
    <name type="common">Clostridium cellulolyticum</name>
    <dbReference type="NCBI Taxonomy" id="394503"/>
    <lineage>
        <taxon>Bacteria</taxon>
        <taxon>Bacillati</taxon>
        <taxon>Bacillota</taxon>
        <taxon>Clostridia</taxon>
        <taxon>Eubacteriales</taxon>
        <taxon>Oscillospiraceae</taxon>
        <taxon>Ruminiclostridium</taxon>
    </lineage>
</organism>
<evidence type="ECO:0000255" key="1">
    <source>
        <dbReference type="HAMAP-Rule" id="MF_01006"/>
    </source>
</evidence>
<keyword id="KW-0046">Antibiotic resistance</keyword>
<keyword id="KW-1003">Cell membrane</keyword>
<keyword id="KW-0133">Cell shape</keyword>
<keyword id="KW-0961">Cell wall biogenesis/degradation</keyword>
<keyword id="KW-0378">Hydrolase</keyword>
<keyword id="KW-0472">Membrane</keyword>
<keyword id="KW-0573">Peptidoglycan synthesis</keyword>
<keyword id="KW-1185">Reference proteome</keyword>
<keyword id="KW-0812">Transmembrane</keyword>
<keyword id="KW-1133">Transmembrane helix</keyword>
<sequence>MDTLLFVLKSIVLGIVEGVTEFLPISSTGHLIIFENIMGFKSASPNYVKMYTYVIQLGAIMAVVLLYWKKIKETVINFFPGKVGYEKSGFKFWFMIFIACIPGAAVKLLLDAPVEKYLMTPVSVAIVLILGGLWMIYAEKKFRNNNLGKQKLSVTPKQALIIGAFQCLAIIPGMSRSASTIIGGWVAGLSTVVAAEFSFFLAIPVMFGYSLLEIIRIGGLTSLPAAELISLVVGFIVAFIVAVAVISQFISYLKRKPLKSFAIYRMIFAVIVLIAGFMGFF</sequence>
<proteinExistence type="inferred from homology"/>
<comment type="function">
    <text evidence="1">Catalyzes the dephosphorylation of undecaprenyl diphosphate (UPP). Confers resistance to bacitracin.</text>
</comment>
<comment type="catalytic activity">
    <reaction evidence="1">
        <text>di-trans,octa-cis-undecaprenyl diphosphate + H2O = di-trans,octa-cis-undecaprenyl phosphate + phosphate + H(+)</text>
        <dbReference type="Rhea" id="RHEA:28094"/>
        <dbReference type="ChEBI" id="CHEBI:15377"/>
        <dbReference type="ChEBI" id="CHEBI:15378"/>
        <dbReference type="ChEBI" id="CHEBI:43474"/>
        <dbReference type="ChEBI" id="CHEBI:58405"/>
        <dbReference type="ChEBI" id="CHEBI:60392"/>
        <dbReference type="EC" id="3.6.1.27"/>
    </reaction>
</comment>
<comment type="subcellular location">
    <subcellularLocation>
        <location evidence="1">Cell membrane</location>
        <topology evidence="1">Multi-pass membrane protein</topology>
    </subcellularLocation>
</comment>
<comment type="miscellaneous">
    <text>Bacitracin is thought to be involved in the inhibition of peptidoglycan synthesis by sequestering undecaprenyl diphosphate, thereby reducing the pool of lipid carrier available.</text>
</comment>
<comment type="similarity">
    <text evidence="1">Belongs to the UppP family.</text>
</comment>
<accession>B8I004</accession>
<dbReference type="EC" id="3.6.1.27" evidence="1"/>
<dbReference type="EMBL" id="CP001348">
    <property type="protein sequence ID" value="ACL75504.1"/>
    <property type="molecule type" value="Genomic_DNA"/>
</dbReference>
<dbReference type="RefSeq" id="WP_015924659.1">
    <property type="nucleotide sequence ID" value="NC_011898.1"/>
</dbReference>
<dbReference type="SMR" id="B8I004"/>
<dbReference type="STRING" id="394503.Ccel_1147"/>
<dbReference type="KEGG" id="cce:Ccel_1147"/>
<dbReference type="eggNOG" id="COG1968">
    <property type="taxonomic scope" value="Bacteria"/>
</dbReference>
<dbReference type="HOGENOM" id="CLU_060296_2_0_9"/>
<dbReference type="OrthoDB" id="9808289at2"/>
<dbReference type="Proteomes" id="UP000001349">
    <property type="component" value="Chromosome"/>
</dbReference>
<dbReference type="GO" id="GO:0005886">
    <property type="term" value="C:plasma membrane"/>
    <property type="evidence" value="ECO:0007669"/>
    <property type="project" value="UniProtKB-SubCell"/>
</dbReference>
<dbReference type="GO" id="GO:0050380">
    <property type="term" value="F:undecaprenyl-diphosphatase activity"/>
    <property type="evidence" value="ECO:0007669"/>
    <property type="project" value="UniProtKB-UniRule"/>
</dbReference>
<dbReference type="GO" id="GO:0071555">
    <property type="term" value="P:cell wall organization"/>
    <property type="evidence" value="ECO:0007669"/>
    <property type="project" value="UniProtKB-KW"/>
</dbReference>
<dbReference type="GO" id="GO:0009252">
    <property type="term" value="P:peptidoglycan biosynthetic process"/>
    <property type="evidence" value="ECO:0007669"/>
    <property type="project" value="UniProtKB-KW"/>
</dbReference>
<dbReference type="GO" id="GO:0008360">
    <property type="term" value="P:regulation of cell shape"/>
    <property type="evidence" value="ECO:0007669"/>
    <property type="project" value="UniProtKB-KW"/>
</dbReference>
<dbReference type="GO" id="GO:0046677">
    <property type="term" value="P:response to antibiotic"/>
    <property type="evidence" value="ECO:0007669"/>
    <property type="project" value="UniProtKB-UniRule"/>
</dbReference>
<dbReference type="HAMAP" id="MF_01006">
    <property type="entry name" value="Undec_diphosphatase"/>
    <property type="match status" value="1"/>
</dbReference>
<dbReference type="InterPro" id="IPR003824">
    <property type="entry name" value="UppP"/>
</dbReference>
<dbReference type="NCBIfam" id="NF001390">
    <property type="entry name" value="PRK00281.1-4"/>
    <property type="match status" value="1"/>
</dbReference>
<dbReference type="PANTHER" id="PTHR30622">
    <property type="entry name" value="UNDECAPRENYL-DIPHOSPHATASE"/>
    <property type="match status" value="1"/>
</dbReference>
<dbReference type="PANTHER" id="PTHR30622:SF3">
    <property type="entry name" value="UNDECAPRENYL-DIPHOSPHATASE"/>
    <property type="match status" value="1"/>
</dbReference>
<dbReference type="Pfam" id="PF02673">
    <property type="entry name" value="BacA"/>
    <property type="match status" value="1"/>
</dbReference>
<gene>
    <name evidence="1" type="primary">uppP</name>
    <name type="ordered locus">Ccel_1147</name>
</gene>
<protein>
    <recommendedName>
        <fullName evidence="1">Undecaprenyl-diphosphatase</fullName>
        <ecNumber evidence="1">3.6.1.27</ecNumber>
    </recommendedName>
    <alternativeName>
        <fullName evidence="1">Bacitracin resistance protein</fullName>
    </alternativeName>
    <alternativeName>
        <fullName evidence="1">Undecaprenyl pyrophosphate phosphatase</fullName>
    </alternativeName>
</protein>
<name>UPPP_RUMCH</name>
<feature type="chain" id="PRO_1000148807" description="Undecaprenyl-diphosphatase">
    <location>
        <begin position="1"/>
        <end position="281"/>
    </location>
</feature>
<feature type="transmembrane region" description="Helical" evidence="1">
    <location>
        <begin position="5"/>
        <end position="25"/>
    </location>
</feature>
<feature type="transmembrane region" description="Helical" evidence="1">
    <location>
        <begin position="48"/>
        <end position="68"/>
    </location>
</feature>
<feature type="transmembrane region" description="Helical" evidence="1">
    <location>
        <begin position="92"/>
        <end position="112"/>
    </location>
</feature>
<feature type="transmembrane region" description="Helical" evidence="1">
    <location>
        <begin position="118"/>
        <end position="138"/>
    </location>
</feature>
<feature type="transmembrane region" description="Helical" evidence="1">
    <location>
        <begin position="154"/>
        <end position="174"/>
    </location>
</feature>
<feature type="transmembrane region" description="Helical" evidence="1">
    <location>
        <begin position="192"/>
        <end position="212"/>
    </location>
</feature>
<feature type="transmembrane region" description="Helical" evidence="1">
    <location>
        <begin position="226"/>
        <end position="246"/>
    </location>
</feature>
<feature type="transmembrane region" description="Helical" evidence="1">
    <location>
        <begin position="261"/>
        <end position="281"/>
    </location>
</feature>